<evidence type="ECO:0000255" key="1">
    <source>
        <dbReference type="HAMAP-Rule" id="MF_00300"/>
    </source>
</evidence>
<proteinExistence type="inferred from homology"/>
<sequence length="359" mass="38704">MRNRFGSLFSLTTWGESHGPCLGVVIDGCPAGLQLSPEDFVPAMSRRCPGRPGTSPRKEADTVHILSGIYQGKTTGTPIALQIFNTDVNSDPYREQDDRYRPGHGQFAYEKKYGIVDPLGGGRSSGRETACRVAAGVIAAKFLAHYDIHCLAFLSKLGQVSIEEYPKYSKEFAQSIYNSPFLSPLNHDAIFQIITDLQNTQDSLGGVVSFITSPIHESLGEPVFSKVQAMLASALMSIPAAKGFEIGLGFASADRYGSEYIDPIIIEDGRISMRSNNCGGSLGGITIGMPLNGRVVFKPTSSIHKPCGTVTKTGEPTSYVTQKGSRHDPCVTIRAVGVVEAMVNLVLADLLLQQRCARL</sequence>
<keyword id="KW-0028">Amino-acid biosynthesis</keyword>
<keyword id="KW-0057">Aromatic amino acid biosynthesis</keyword>
<keyword id="KW-0274">FAD</keyword>
<keyword id="KW-0285">Flavoprotein</keyword>
<keyword id="KW-0288">FMN</keyword>
<keyword id="KW-0456">Lyase</keyword>
<keyword id="KW-0521">NADP</keyword>
<organism>
    <name type="scientific">Chlamydia abortus (strain DSM 27085 / S26/3)</name>
    <name type="common">Chlamydophila abortus</name>
    <dbReference type="NCBI Taxonomy" id="218497"/>
    <lineage>
        <taxon>Bacteria</taxon>
        <taxon>Pseudomonadati</taxon>
        <taxon>Chlamydiota</taxon>
        <taxon>Chlamydiia</taxon>
        <taxon>Chlamydiales</taxon>
        <taxon>Chlamydiaceae</taxon>
        <taxon>Chlamydia/Chlamydophila group</taxon>
        <taxon>Chlamydia</taxon>
    </lineage>
</organism>
<protein>
    <recommendedName>
        <fullName evidence="1">Chorismate synthase</fullName>
        <shortName evidence="1">CS</shortName>
        <ecNumber evidence="1">4.2.3.5</ecNumber>
    </recommendedName>
    <alternativeName>
        <fullName evidence="1">5-enolpyruvylshikimate-3-phosphate phospholyase</fullName>
    </alternativeName>
</protein>
<reference key="1">
    <citation type="journal article" date="2005" name="Genome Res.">
        <title>The Chlamydophila abortus genome sequence reveals an array of variable proteins that contribute to interspecies variation.</title>
        <authorList>
            <person name="Thomson N.R."/>
            <person name="Yeats C."/>
            <person name="Bell K."/>
            <person name="Holden M.T.G."/>
            <person name="Bentley S.D."/>
            <person name="Livingstone M."/>
            <person name="Cerdeno-Tarraga A.-M."/>
            <person name="Harris B."/>
            <person name="Doggett J."/>
            <person name="Ormond D."/>
            <person name="Mungall K."/>
            <person name="Clarke K."/>
            <person name="Feltwell T."/>
            <person name="Hance Z."/>
            <person name="Sanders M."/>
            <person name="Quail M.A."/>
            <person name="Price C."/>
            <person name="Barrell B.G."/>
            <person name="Parkhill J."/>
            <person name="Longbottom D."/>
        </authorList>
    </citation>
    <scope>NUCLEOTIDE SEQUENCE [LARGE SCALE GENOMIC DNA]</scope>
    <source>
        <strain>DSM 27085 / S26/3</strain>
    </source>
</reference>
<name>AROC_CHLAB</name>
<feature type="chain" id="PRO_1000022476" description="Chorismate synthase">
    <location>
        <begin position="1"/>
        <end position="359"/>
    </location>
</feature>
<feature type="binding site" evidence="1">
    <location>
        <position position="47"/>
    </location>
    <ligand>
        <name>NADP(+)</name>
        <dbReference type="ChEBI" id="CHEBI:58349"/>
    </ligand>
</feature>
<feature type="binding site" evidence="1">
    <location>
        <begin position="123"/>
        <end position="125"/>
    </location>
    <ligand>
        <name>FMN</name>
        <dbReference type="ChEBI" id="CHEBI:58210"/>
    </ligand>
</feature>
<feature type="binding site" evidence="1">
    <location>
        <position position="283"/>
    </location>
    <ligand>
        <name>FMN</name>
        <dbReference type="ChEBI" id="CHEBI:58210"/>
    </ligand>
</feature>
<feature type="binding site" evidence="1">
    <location>
        <begin position="298"/>
        <end position="302"/>
    </location>
    <ligand>
        <name>FMN</name>
        <dbReference type="ChEBI" id="CHEBI:58210"/>
    </ligand>
</feature>
<feature type="binding site" evidence="1">
    <location>
        <position position="326"/>
    </location>
    <ligand>
        <name>FMN</name>
        <dbReference type="ChEBI" id="CHEBI:58210"/>
    </ligand>
</feature>
<comment type="function">
    <text evidence="1">Catalyzes the anti-1,4-elimination of the C-3 phosphate and the C-6 proR hydrogen from 5-enolpyruvylshikimate-3-phosphate (EPSP) to yield chorismate, which is the branch point compound that serves as the starting substrate for the three terminal pathways of aromatic amino acid biosynthesis. This reaction introduces a second double bond into the aromatic ring system.</text>
</comment>
<comment type="catalytic activity">
    <reaction evidence="1">
        <text>5-O-(1-carboxyvinyl)-3-phosphoshikimate = chorismate + phosphate</text>
        <dbReference type="Rhea" id="RHEA:21020"/>
        <dbReference type="ChEBI" id="CHEBI:29748"/>
        <dbReference type="ChEBI" id="CHEBI:43474"/>
        <dbReference type="ChEBI" id="CHEBI:57701"/>
        <dbReference type="EC" id="4.2.3.5"/>
    </reaction>
</comment>
<comment type="cofactor">
    <cofactor evidence="1">
        <name>FMNH2</name>
        <dbReference type="ChEBI" id="CHEBI:57618"/>
    </cofactor>
    <text evidence="1">Reduced FMN (FMNH(2)).</text>
</comment>
<comment type="pathway">
    <text evidence="1">Metabolic intermediate biosynthesis; chorismate biosynthesis; chorismate from D-erythrose 4-phosphate and phosphoenolpyruvate: step 7/7.</text>
</comment>
<comment type="subunit">
    <text evidence="1">Homotetramer.</text>
</comment>
<comment type="similarity">
    <text evidence="1">Belongs to the chorismate synthase family.</text>
</comment>
<accession>Q5L5F2</accession>
<gene>
    <name evidence="1" type="primary">aroC</name>
    <name type="ordered locus">CAB692</name>
</gene>
<dbReference type="EC" id="4.2.3.5" evidence="1"/>
<dbReference type="EMBL" id="CR848038">
    <property type="protein sequence ID" value="CAH64139.1"/>
    <property type="molecule type" value="Genomic_DNA"/>
</dbReference>
<dbReference type="RefSeq" id="WP_011097268.1">
    <property type="nucleotide sequence ID" value="NC_004552.2"/>
</dbReference>
<dbReference type="SMR" id="Q5L5F2"/>
<dbReference type="KEGG" id="cab:CAB692"/>
<dbReference type="eggNOG" id="COG0082">
    <property type="taxonomic scope" value="Bacteria"/>
</dbReference>
<dbReference type="HOGENOM" id="CLU_034547_0_0_0"/>
<dbReference type="OrthoDB" id="9771806at2"/>
<dbReference type="UniPathway" id="UPA00053">
    <property type="reaction ID" value="UER00090"/>
</dbReference>
<dbReference type="Proteomes" id="UP000001012">
    <property type="component" value="Chromosome"/>
</dbReference>
<dbReference type="GO" id="GO:0005829">
    <property type="term" value="C:cytosol"/>
    <property type="evidence" value="ECO:0007669"/>
    <property type="project" value="TreeGrafter"/>
</dbReference>
<dbReference type="GO" id="GO:0004107">
    <property type="term" value="F:chorismate synthase activity"/>
    <property type="evidence" value="ECO:0007669"/>
    <property type="project" value="UniProtKB-UniRule"/>
</dbReference>
<dbReference type="GO" id="GO:0010181">
    <property type="term" value="F:FMN binding"/>
    <property type="evidence" value="ECO:0007669"/>
    <property type="project" value="TreeGrafter"/>
</dbReference>
<dbReference type="GO" id="GO:0008652">
    <property type="term" value="P:amino acid biosynthetic process"/>
    <property type="evidence" value="ECO:0007669"/>
    <property type="project" value="UniProtKB-KW"/>
</dbReference>
<dbReference type="GO" id="GO:0009073">
    <property type="term" value="P:aromatic amino acid family biosynthetic process"/>
    <property type="evidence" value="ECO:0007669"/>
    <property type="project" value="UniProtKB-KW"/>
</dbReference>
<dbReference type="GO" id="GO:0009423">
    <property type="term" value="P:chorismate biosynthetic process"/>
    <property type="evidence" value="ECO:0007669"/>
    <property type="project" value="UniProtKB-UniRule"/>
</dbReference>
<dbReference type="CDD" id="cd07304">
    <property type="entry name" value="Chorismate_synthase"/>
    <property type="match status" value="1"/>
</dbReference>
<dbReference type="Gene3D" id="3.60.150.10">
    <property type="entry name" value="Chorismate synthase AroC"/>
    <property type="match status" value="1"/>
</dbReference>
<dbReference type="HAMAP" id="MF_00300">
    <property type="entry name" value="Chorismate_synth"/>
    <property type="match status" value="1"/>
</dbReference>
<dbReference type="InterPro" id="IPR000453">
    <property type="entry name" value="Chorismate_synth"/>
</dbReference>
<dbReference type="InterPro" id="IPR035904">
    <property type="entry name" value="Chorismate_synth_AroC_sf"/>
</dbReference>
<dbReference type="InterPro" id="IPR020541">
    <property type="entry name" value="Chorismate_synthase_CS"/>
</dbReference>
<dbReference type="NCBIfam" id="TIGR00033">
    <property type="entry name" value="aroC"/>
    <property type="match status" value="1"/>
</dbReference>
<dbReference type="NCBIfam" id="NF003793">
    <property type="entry name" value="PRK05382.1"/>
    <property type="match status" value="1"/>
</dbReference>
<dbReference type="PANTHER" id="PTHR21085">
    <property type="entry name" value="CHORISMATE SYNTHASE"/>
    <property type="match status" value="1"/>
</dbReference>
<dbReference type="PANTHER" id="PTHR21085:SF0">
    <property type="entry name" value="CHORISMATE SYNTHASE"/>
    <property type="match status" value="1"/>
</dbReference>
<dbReference type="Pfam" id="PF01264">
    <property type="entry name" value="Chorismate_synt"/>
    <property type="match status" value="1"/>
</dbReference>
<dbReference type="PIRSF" id="PIRSF001456">
    <property type="entry name" value="Chorismate_synth"/>
    <property type="match status" value="1"/>
</dbReference>
<dbReference type="SUPFAM" id="SSF103263">
    <property type="entry name" value="Chorismate synthase, AroC"/>
    <property type="match status" value="1"/>
</dbReference>
<dbReference type="PROSITE" id="PS00787">
    <property type="entry name" value="CHORISMATE_SYNTHASE_1"/>
    <property type="match status" value="1"/>
</dbReference>
<dbReference type="PROSITE" id="PS00788">
    <property type="entry name" value="CHORISMATE_SYNTHASE_2"/>
    <property type="match status" value="1"/>
</dbReference>
<dbReference type="PROSITE" id="PS00789">
    <property type="entry name" value="CHORISMATE_SYNTHASE_3"/>
    <property type="match status" value="1"/>
</dbReference>